<name>RUTR_ECOL6</name>
<dbReference type="EMBL" id="AE014075">
    <property type="protein sequence ID" value="AAN79618.1"/>
    <property type="status" value="ALT_INIT"/>
    <property type="molecule type" value="Genomic_DNA"/>
</dbReference>
<dbReference type="RefSeq" id="WP_000191701.1">
    <property type="nucleotide sequence ID" value="NZ_CP051263.1"/>
</dbReference>
<dbReference type="SMR" id="P0ACU3"/>
<dbReference type="STRING" id="199310.c1150"/>
<dbReference type="GeneID" id="75171089"/>
<dbReference type="KEGG" id="ecc:c1150"/>
<dbReference type="eggNOG" id="COG1309">
    <property type="taxonomic scope" value="Bacteria"/>
</dbReference>
<dbReference type="HOGENOM" id="CLU_069356_1_0_6"/>
<dbReference type="EvolutionaryTrace" id="P0ACU3"/>
<dbReference type="Proteomes" id="UP000001410">
    <property type="component" value="Chromosome"/>
</dbReference>
<dbReference type="GO" id="GO:0003700">
    <property type="term" value="F:DNA-binding transcription factor activity"/>
    <property type="evidence" value="ECO:0007669"/>
    <property type="project" value="TreeGrafter"/>
</dbReference>
<dbReference type="GO" id="GO:0000976">
    <property type="term" value="F:transcription cis-regulatory region binding"/>
    <property type="evidence" value="ECO:0007669"/>
    <property type="project" value="TreeGrafter"/>
</dbReference>
<dbReference type="GO" id="GO:0045892">
    <property type="term" value="P:negative regulation of DNA-templated transcription"/>
    <property type="evidence" value="ECO:0000250"/>
    <property type="project" value="UniProtKB"/>
</dbReference>
<dbReference type="GO" id="GO:0045893">
    <property type="term" value="P:positive regulation of DNA-templated transcription"/>
    <property type="evidence" value="ECO:0000250"/>
    <property type="project" value="UniProtKB"/>
</dbReference>
<dbReference type="FunFam" id="1.10.357.10:FF:000010">
    <property type="entry name" value="HTH-type transcriptional regulator RutR"/>
    <property type="match status" value="1"/>
</dbReference>
<dbReference type="Gene3D" id="1.10.10.60">
    <property type="entry name" value="Homeodomain-like"/>
    <property type="match status" value="1"/>
</dbReference>
<dbReference type="Gene3D" id="1.10.357.10">
    <property type="entry name" value="Tetracycline Repressor, domain 2"/>
    <property type="match status" value="1"/>
</dbReference>
<dbReference type="InterPro" id="IPR009057">
    <property type="entry name" value="Homeodomain-like_sf"/>
</dbReference>
<dbReference type="InterPro" id="IPR050109">
    <property type="entry name" value="HTH-type_TetR-like_transc_reg"/>
</dbReference>
<dbReference type="InterPro" id="IPR001647">
    <property type="entry name" value="HTH_TetR"/>
</dbReference>
<dbReference type="InterPro" id="IPR036271">
    <property type="entry name" value="Tet_transcr_reg_TetR-rel_C_sf"/>
</dbReference>
<dbReference type="InterPro" id="IPR019915">
    <property type="entry name" value="Tscrpt_reg_pyr_util_RutR"/>
</dbReference>
<dbReference type="InterPro" id="IPR013573">
    <property type="entry name" value="Tscrpt_reg_YcdC_C"/>
</dbReference>
<dbReference type="NCBIfam" id="NF011584">
    <property type="entry name" value="PRK15008.1"/>
    <property type="match status" value="1"/>
</dbReference>
<dbReference type="NCBIfam" id="TIGR03613">
    <property type="entry name" value="RutR"/>
    <property type="match status" value="1"/>
</dbReference>
<dbReference type="PANTHER" id="PTHR30055">
    <property type="entry name" value="HTH-TYPE TRANSCRIPTIONAL REGULATOR RUTR"/>
    <property type="match status" value="1"/>
</dbReference>
<dbReference type="PANTHER" id="PTHR30055:SF196">
    <property type="entry name" value="HTH-TYPE TRANSCRIPTIONAL REGULATOR RUTR"/>
    <property type="match status" value="1"/>
</dbReference>
<dbReference type="Pfam" id="PF08362">
    <property type="entry name" value="TetR_C_3"/>
    <property type="match status" value="1"/>
</dbReference>
<dbReference type="Pfam" id="PF00440">
    <property type="entry name" value="TetR_N"/>
    <property type="match status" value="1"/>
</dbReference>
<dbReference type="PRINTS" id="PR00455">
    <property type="entry name" value="HTHTETR"/>
</dbReference>
<dbReference type="SUPFAM" id="SSF46689">
    <property type="entry name" value="Homeodomain-like"/>
    <property type="match status" value="1"/>
</dbReference>
<dbReference type="SUPFAM" id="SSF48498">
    <property type="entry name" value="Tetracyclin repressor-like, C-terminal domain"/>
    <property type="match status" value="1"/>
</dbReference>
<dbReference type="PROSITE" id="PS50977">
    <property type="entry name" value="HTH_TETR_2"/>
    <property type="match status" value="1"/>
</dbReference>
<accession>P0ACU3</accession>
<accession>P75899</accession>
<keyword id="KW-0238">DNA-binding</keyword>
<keyword id="KW-1185">Reference proteome</keyword>
<keyword id="KW-0678">Repressor</keyword>
<keyword id="KW-0804">Transcription</keyword>
<keyword id="KW-0805">Transcription regulation</keyword>
<proteinExistence type="inferred from homology"/>
<sequence length="212" mass="23688">MTQGAVKTTGKRSRAVSAKKKAILSAALDTFSQFGFHGTRLEQIAELAGVSKTNLLYYFPSKEALYIAVLRQILDIWLAPLKAFREDFAPLAAIKEYIRLKLEVSRDYPQASRLFCMEMLAGAPLLMDELTGDLKALIDEKSALIAGWVKSGKLAPIDPQHLIFMIWASTQHYADFAPQVEAVTGATLRDEVFFNQTVENVQRIIIEGIRPR</sequence>
<gene>
    <name type="primary">rutR</name>
    <name type="ordered locus">c1150</name>
</gene>
<organism>
    <name type="scientific">Escherichia coli O6:H1 (strain CFT073 / ATCC 700928 / UPEC)</name>
    <dbReference type="NCBI Taxonomy" id="199310"/>
    <lineage>
        <taxon>Bacteria</taxon>
        <taxon>Pseudomonadati</taxon>
        <taxon>Pseudomonadota</taxon>
        <taxon>Gammaproteobacteria</taxon>
        <taxon>Enterobacterales</taxon>
        <taxon>Enterobacteriaceae</taxon>
        <taxon>Escherichia</taxon>
    </lineage>
</organism>
<reference key="1">
    <citation type="journal article" date="2002" name="Proc. Natl. Acad. Sci. U.S.A.">
        <title>Extensive mosaic structure revealed by the complete genome sequence of uropathogenic Escherichia coli.</title>
        <authorList>
            <person name="Welch R.A."/>
            <person name="Burland V."/>
            <person name="Plunkett G. III"/>
            <person name="Redford P."/>
            <person name="Roesch P."/>
            <person name="Rasko D."/>
            <person name="Buckles E.L."/>
            <person name="Liou S.-R."/>
            <person name="Boutin A."/>
            <person name="Hackett J."/>
            <person name="Stroud D."/>
            <person name="Mayhew G.F."/>
            <person name="Rose D.J."/>
            <person name="Zhou S."/>
            <person name="Schwartz D.C."/>
            <person name="Perna N.T."/>
            <person name="Mobley H.L.T."/>
            <person name="Donnenberg M.S."/>
            <person name="Blattner F.R."/>
        </authorList>
    </citation>
    <scope>NUCLEOTIDE SEQUENCE [LARGE SCALE GENOMIC DNA]</scope>
    <source>
        <strain>CFT073 / ATCC 700928 / UPEC</strain>
    </source>
</reference>
<protein>
    <recommendedName>
        <fullName>HTH-type transcriptional regulator RutR</fullName>
    </recommendedName>
    <alternativeName>
        <fullName>Rut operon repressor</fullName>
    </alternativeName>
</protein>
<comment type="function">
    <text evidence="1">Master transcription regulator which represses the degradation of pyrimidines (rutABCDEFG) and purines (gcl operon) for maintenance of metabolic balance between pyrimidines and purines. It also regulates the synthesis of pyrimidine nucleotides and arginine from glutamine (carAB) and the supply of glutamate (gadABWX) (By similarity).</text>
</comment>
<comment type="subunit">
    <text evidence="1">Homodimer.</text>
</comment>
<comment type="sequence caution" evidence="3">
    <conflict type="erroneous initiation">
        <sequence resource="EMBL-CDS" id="AAN79618"/>
    </conflict>
    <text>Extended N-terminus.</text>
</comment>
<evidence type="ECO:0000250" key="1"/>
<evidence type="ECO:0000255" key="2">
    <source>
        <dbReference type="PROSITE-ProRule" id="PRU00335"/>
    </source>
</evidence>
<evidence type="ECO:0000305" key="3"/>
<feature type="chain" id="PRO_0000070636" description="HTH-type transcriptional regulator RutR">
    <location>
        <begin position="1"/>
        <end position="212"/>
    </location>
</feature>
<feature type="domain" description="HTH tetR-type" evidence="2">
    <location>
        <begin position="17"/>
        <end position="77"/>
    </location>
</feature>
<feature type="DNA-binding region" description="H-T-H motif" evidence="2">
    <location>
        <begin position="39"/>
        <end position="58"/>
    </location>
</feature>